<gene>
    <name evidence="1" type="primary">pth</name>
    <name type="ordered locus">GbCGDNIH1_2317</name>
</gene>
<accession>Q0BPN7</accession>
<protein>
    <recommendedName>
        <fullName evidence="1">Peptidyl-tRNA hydrolase</fullName>
        <shortName evidence="1">Pth</shortName>
        <ecNumber evidence="1">3.1.1.29</ecNumber>
    </recommendedName>
</protein>
<feature type="chain" id="PRO_0000264043" description="Peptidyl-tRNA hydrolase">
    <location>
        <begin position="1"/>
        <end position="194"/>
    </location>
</feature>
<feature type="active site" description="Proton acceptor" evidence="1">
    <location>
        <position position="22"/>
    </location>
</feature>
<feature type="binding site" evidence="1">
    <location>
        <position position="67"/>
    </location>
    <ligand>
        <name>tRNA</name>
        <dbReference type="ChEBI" id="CHEBI:17843"/>
    </ligand>
</feature>
<feature type="binding site" evidence="1">
    <location>
        <position position="69"/>
    </location>
    <ligand>
        <name>tRNA</name>
        <dbReference type="ChEBI" id="CHEBI:17843"/>
    </ligand>
</feature>
<feature type="binding site" evidence="1">
    <location>
        <position position="115"/>
    </location>
    <ligand>
        <name>tRNA</name>
        <dbReference type="ChEBI" id="CHEBI:17843"/>
    </ligand>
</feature>
<feature type="site" description="Discriminates between blocked and unblocked aminoacyl-tRNA" evidence="1">
    <location>
        <position position="12"/>
    </location>
</feature>
<feature type="site" description="Stabilizes the basic form of H active site to accept a proton" evidence="1">
    <location>
        <position position="94"/>
    </location>
</feature>
<name>PTH_GRABC</name>
<sequence>MPSLLLWTGLGNPEPGMALQRHNIGFMAVDAIAQRHGFTPWRNRFKGLTAEGTLAGRKIILLKPMTYMNASGESVQPATAFFKLPPEAVSAFHDELDLAPGKVRVKRGGGAAGHNGLRSMDRMLGTPEYWRVRLGIGHPGSKERVHGHVLGNFAKSDQEWLGPLLEAVADAAPLLAEGRAEDFMTRIALLTHRQ</sequence>
<evidence type="ECO:0000255" key="1">
    <source>
        <dbReference type="HAMAP-Rule" id="MF_00083"/>
    </source>
</evidence>
<proteinExistence type="inferred from homology"/>
<reference key="1">
    <citation type="journal article" date="2007" name="J. Bacteriol.">
        <title>Genome sequence analysis of the emerging human pathogenic acetic acid bacterium Granulibacter bethesdensis.</title>
        <authorList>
            <person name="Greenberg D.E."/>
            <person name="Porcella S.F."/>
            <person name="Zelazny A.M."/>
            <person name="Virtaneva K."/>
            <person name="Sturdevant D.E."/>
            <person name="Kupko J.J. III"/>
            <person name="Barbian K.D."/>
            <person name="Babar A."/>
            <person name="Dorward D.W."/>
            <person name="Holland S.M."/>
        </authorList>
    </citation>
    <scope>NUCLEOTIDE SEQUENCE [LARGE SCALE GENOMIC DNA]</scope>
    <source>
        <strain>ATCC BAA-1260 / CGDNIH1</strain>
    </source>
</reference>
<comment type="function">
    <text evidence="1">Hydrolyzes ribosome-free peptidyl-tRNAs (with 1 or more amino acids incorporated), which drop off the ribosome during protein synthesis, or as a result of ribosome stalling.</text>
</comment>
<comment type="function">
    <text evidence="1">Catalyzes the release of premature peptidyl moieties from peptidyl-tRNA molecules trapped in stalled 50S ribosomal subunits, and thus maintains levels of free tRNAs and 50S ribosomes.</text>
</comment>
<comment type="catalytic activity">
    <reaction evidence="1">
        <text>an N-acyl-L-alpha-aminoacyl-tRNA + H2O = an N-acyl-L-amino acid + a tRNA + H(+)</text>
        <dbReference type="Rhea" id="RHEA:54448"/>
        <dbReference type="Rhea" id="RHEA-COMP:10123"/>
        <dbReference type="Rhea" id="RHEA-COMP:13883"/>
        <dbReference type="ChEBI" id="CHEBI:15377"/>
        <dbReference type="ChEBI" id="CHEBI:15378"/>
        <dbReference type="ChEBI" id="CHEBI:59874"/>
        <dbReference type="ChEBI" id="CHEBI:78442"/>
        <dbReference type="ChEBI" id="CHEBI:138191"/>
        <dbReference type="EC" id="3.1.1.29"/>
    </reaction>
</comment>
<comment type="subunit">
    <text evidence="1">Monomer.</text>
</comment>
<comment type="subcellular location">
    <subcellularLocation>
        <location evidence="1">Cytoplasm</location>
    </subcellularLocation>
</comment>
<comment type="similarity">
    <text evidence="1">Belongs to the PTH family.</text>
</comment>
<keyword id="KW-0963">Cytoplasm</keyword>
<keyword id="KW-0378">Hydrolase</keyword>
<keyword id="KW-1185">Reference proteome</keyword>
<keyword id="KW-0694">RNA-binding</keyword>
<keyword id="KW-0820">tRNA-binding</keyword>
<dbReference type="EC" id="3.1.1.29" evidence="1"/>
<dbReference type="EMBL" id="CP000394">
    <property type="protein sequence ID" value="ABI63215.1"/>
    <property type="molecule type" value="Genomic_DNA"/>
</dbReference>
<dbReference type="SMR" id="Q0BPN7"/>
<dbReference type="STRING" id="391165.GbCGDNIH1_2317"/>
<dbReference type="KEGG" id="gbe:GbCGDNIH1_2317"/>
<dbReference type="eggNOG" id="COG0193">
    <property type="taxonomic scope" value="Bacteria"/>
</dbReference>
<dbReference type="HOGENOM" id="CLU_062456_1_0_5"/>
<dbReference type="Proteomes" id="UP000001963">
    <property type="component" value="Chromosome"/>
</dbReference>
<dbReference type="GO" id="GO:0005737">
    <property type="term" value="C:cytoplasm"/>
    <property type="evidence" value="ECO:0007669"/>
    <property type="project" value="UniProtKB-SubCell"/>
</dbReference>
<dbReference type="GO" id="GO:0004045">
    <property type="term" value="F:peptidyl-tRNA hydrolase activity"/>
    <property type="evidence" value="ECO:0007669"/>
    <property type="project" value="UniProtKB-UniRule"/>
</dbReference>
<dbReference type="GO" id="GO:0000049">
    <property type="term" value="F:tRNA binding"/>
    <property type="evidence" value="ECO:0007669"/>
    <property type="project" value="UniProtKB-UniRule"/>
</dbReference>
<dbReference type="GO" id="GO:0006515">
    <property type="term" value="P:protein quality control for misfolded or incompletely synthesized proteins"/>
    <property type="evidence" value="ECO:0007669"/>
    <property type="project" value="UniProtKB-UniRule"/>
</dbReference>
<dbReference type="GO" id="GO:0072344">
    <property type="term" value="P:rescue of stalled ribosome"/>
    <property type="evidence" value="ECO:0007669"/>
    <property type="project" value="UniProtKB-UniRule"/>
</dbReference>
<dbReference type="CDD" id="cd00462">
    <property type="entry name" value="PTH"/>
    <property type="match status" value="1"/>
</dbReference>
<dbReference type="FunFam" id="3.40.50.1470:FF:000001">
    <property type="entry name" value="Peptidyl-tRNA hydrolase"/>
    <property type="match status" value="1"/>
</dbReference>
<dbReference type="Gene3D" id="3.40.50.1470">
    <property type="entry name" value="Peptidyl-tRNA hydrolase"/>
    <property type="match status" value="1"/>
</dbReference>
<dbReference type="HAMAP" id="MF_00083">
    <property type="entry name" value="Pept_tRNA_hydro_bact"/>
    <property type="match status" value="1"/>
</dbReference>
<dbReference type="InterPro" id="IPR001328">
    <property type="entry name" value="Pept_tRNA_hydro"/>
</dbReference>
<dbReference type="InterPro" id="IPR018171">
    <property type="entry name" value="Pept_tRNA_hydro_CS"/>
</dbReference>
<dbReference type="InterPro" id="IPR036416">
    <property type="entry name" value="Pept_tRNA_hydro_sf"/>
</dbReference>
<dbReference type="NCBIfam" id="TIGR00447">
    <property type="entry name" value="pth"/>
    <property type="match status" value="1"/>
</dbReference>
<dbReference type="PANTHER" id="PTHR17224">
    <property type="entry name" value="PEPTIDYL-TRNA HYDROLASE"/>
    <property type="match status" value="1"/>
</dbReference>
<dbReference type="PANTHER" id="PTHR17224:SF1">
    <property type="entry name" value="PEPTIDYL-TRNA HYDROLASE"/>
    <property type="match status" value="1"/>
</dbReference>
<dbReference type="Pfam" id="PF01195">
    <property type="entry name" value="Pept_tRNA_hydro"/>
    <property type="match status" value="1"/>
</dbReference>
<dbReference type="SUPFAM" id="SSF53178">
    <property type="entry name" value="Peptidyl-tRNA hydrolase-like"/>
    <property type="match status" value="1"/>
</dbReference>
<dbReference type="PROSITE" id="PS01196">
    <property type="entry name" value="PEPT_TRNA_HYDROL_2"/>
    <property type="match status" value="1"/>
</dbReference>
<organism>
    <name type="scientific">Granulibacter bethesdensis (strain ATCC BAA-1260 / CGDNIH1)</name>
    <dbReference type="NCBI Taxonomy" id="391165"/>
    <lineage>
        <taxon>Bacteria</taxon>
        <taxon>Pseudomonadati</taxon>
        <taxon>Pseudomonadota</taxon>
        <taxon>Alphaproteobacteria</taxon>
        <taxon>Acetobacterales</taxon>
        <taxon>Acetobacteraceae</taxon>
        <taxon>Granulibacter</taxon>
    </lineage>
</organism>